<dbReference type="EC" id="2.4.1.21" evidence="1"/>
<dbReference type="EMBL" id="BA000031">
    <property type="protein sequence ID" value="BAC59287.1"/>
    <property type="molecule type" value="Genomic_DNA"/>
</dbReference>
<dbReference type="RefSeq" id="NP_797403.1">
    <property type="nucleotide sequence ID" value="NC_004603.1"/>
</dbReference>
<dbReference type="RefSeq" id="WP_005483115.1">
    <property type="nucleotide sequence ID" value="NC_004603.1"/>
</dbReference>
<dbReference type="SMR" id="Q87QX5"/>
<dbReference type="CAZy" id="GT5">
    <property type="family name" value="Glycosyltransferase Family 5"/>
</dbReference>
<dbReference type="GeneID" id="1188528"/>
<dbReference type="KEGG" id="vpa:VP1024"/>
<dbReference type="PATRIC" id="fig|223926.6.peg.971"/>
<dbReference type="eggNOG" id="COG0297">
    <property type="taxonomic scope" value="Bacteria"/>
</dbReference>
<dbReference type="HOGENOM" id="CLU_009583_18_2_6"/>
<dbReference type="UniPathway" id="UPA00164"/>
<dbReference type="Proteomes" id="UP000002493">
    <property type="component" value="Chromosome 1"/>
</dbReference>
<dbReference type="GO" id="GO:0005829">
    <property type="term" value="C:cytosol"/>
    <property type="evidence" value="ECO:0007669"/>
    <property type="project" value="TreeGrafter"/>
</dbReference>
<dbReference type="GO" id="GO:0009011">
    <property type="term" value="F:alpha-1,4-glucan glucosyltransferase (ADP-glucose donor) activity"/>
    <property type="evidence" value="ECO:0007669"/>
    <property type="project" value="UniProtKB-UniRule"/>
</dbReference>
<dbReference type="GO" id="GO:0004373">
    <property type="term" value="F:alpha-1,4-glucan glucosyltransferase (UDP-glucose donor) activity"/>
    <property type="evidence" value="ECO:0007669"/>
    <property type="project" value="InterPro"/>
</dbReference>
<dbReference type="GO" id="GO:0005978">
    <property type="term" value="P:glycogen biosynthetic process"/>
    <property type="evidence" value="ECO:0007669"/>
    <property type="project" value="UniProtKB-UniRule"/>
</dbReference>
<dbReference type="CDD" id="cd03791">
    <property type="entry name" value="GT5_Glycogen_synthase_DULL1-like"/>
    <property type="match status" value="1"/>
</dbReference>
<dbReference type="Gene3D" id="3.40.50.2000">
    <property type="entry name" value="Glycogen Phosphorylase B"/>
    <property type="match status" value="2"/>
</dbReference>
<dbReference type="HAMAP" id="MF_00484">
    <property type="entry name" value="Glycogen_synth"/>
    <property type="match status" value="1"/>
</dbReference>
<dbReference type="InterPro" id="IPR001296">
    <property type="entry name" value="Glyco_trans_1"/>
</dbReference>
<dbReference type="InterPro" id="IPR011835">
    <property type="entry name" value="GS/SS"/>
</dbReference>
<dbReference type="InterPro" id="IPR013534">
    <property type="entry name" value="Starch_synth_cat_dom"/>
</dbReference>
<dbReference type="NCBIfam" id="TIGR02095">
    <property type="entry name" value="glgA"/>
    <property type="match status" value="1"/>
</dbReference>
<dbReference type="NCBIfam" id="NF001903">
    <property type="entry name" value="PRK00654.2-2"/>
    <property type="match status" value="1"/>
</dbReference>
<dbReference type="NCBIfam" id="NF001906">
    <property type="entry name" value="PRK00654.2-5"/>
    <property type="match status" value="1"/>
</dbReference>
<dbReference type="PANTHER" id="PTHR45825:SF11">
    <property type="entry name" value="ALPHA AMYLASE DOMAIN-CONTAINING PROTEIN"/>
    <property type="match status" value="1"/>
</dbReference>
<dbReference type="PANTHER" id="PTHR45825">
    <property type="entry name" value="GRANULE-BOUND STARCH SYNTHASE 1, CHLOROPLASTIC/AMYLOPLASTIC"/>
    <property type="match status" value="1"/>
</dbReference>
<dbReference type="Pfam" id="PF08323">
    <property type="entry name" value="Glyco_transf_5"/>
    <property type="match status" value="1"/>
</dbReference>
<dbReference type="Pfam" id="PF00534">
    <property type="entry name" value="Glycos_transf_1"/>
    <property type="match status" value="1"/>
</dbReference>
<dbReference type="SUPFAM" id="SSF53756">
    <property type="entry name" value="UDP-Glycosyltransferase/glycogen phosphorylase"/>
    <property type="match status" value="1"/>
</dbReference>
<comment type="function">
    <text evidence="1">Synthesizes alpha-1,4-glucan chains using ADP-glucose.</text>
</comment>
<comment type="catalytic activity">
    <reaction evidence="1">
        <text>[(1-&gt;4)-alpha-D-glucosyl](n) + ADP-alpha-D-glucose = [(1-&gt;4)-alpha-D-glucosyl](n+1) + ADP + H(+)</text>
        <dbReference type="Rhea" id="RHEA:18189"/>
        <dbReference type="Rhea" id="RHEA-COMP:9584"/>
        <dbReference type="Rhea" id="RHEA-COMP:9587"/>
        <dbReference type="ChEBI" id="CHEBI:15378"/>
        <dbReference type="ChEBI" id="CHEBI:15444"/>
        <dbReference type="ChEBI" id="CHEBI:57498"/>
        <dbReference type="ChEBI" id="CHEBI:456216"/>
        <dbReference type="EC" id="2.4.1.21"/>
    </reaction>
</comment>
<comment type="pathway">
    <text evidence="1">Glycan biosynthesis; glycogen biosynthesis.</text>
</comment>
<comment type="similarity">
    <text evidence="1">Belongs to the glycosyltransferase 1 family. Bacterial/plant glycogen synthase subfamily.</text>
</comment>
<evidence type="ECO:0000255" key="1">
    <source>
        <dbReference type="HAMAP-Rule" id="MF_00484"/>
    </source>
</evidence>
<protein>
    <recommendedName>
        <fullName evidence="1">Glycogen synthase</fullName>
        <ecNumber evidence="1">2.4.1.21</ecNumber>
    </recommendedName>
    <alternativeName>
        <fullName evidence="1">Starch [bacterial glycogen] synthase</fullName>
    </alternativeName>
</protein>
<gene>
    <name evidence="1" type="primary">glgA</name>
    <name type="ordered locus">VP1024</name>
</gene>
<name>GLGA_VIBPA</name>
<reference key="1">
    <citation type="journal article" date="2003" name="Lancet">
        <title>Genome sequence of Vibrio parahaemolyticus: a pathogenic mechanism distinct from that of V. cholerae.</title>
        <authorList>
            <person name="Makino K."/>
            <person name="Oshima K."/>
            <person name="Kurokawa K."/>
            <person name="Yokoyama K."/>
            <person name="Uda T."/>
            <person name="Tagomori K."/>
            <person name="Iijima Y."/>
            <person name="Najima M."/>
            <person name="Nakano M."/>
            <person name="Yamashita A."/>
            <person name="Kubota Y."/>
            <person name="Kimura S."/>
            <person name="Yasunaga T."/>
            <person name="Honda T."/>
            <person name="Shinagawa H."/>
            <person name="Hattori M."/>
            <person name="Iida T."/>
        </authorList>
    </citation>
    <scope>NUCLEOTIDE SEQUENCE [LARGE SCALE GENOMIC DNA]</scope>
    <source>
        <strain>RIMD 2210633</strain>
    </source>
</reference>
<organism>
    <name type="scientific">Vibrio parahaemolyticus serotype O3:K6 (strain RIMD 2210633)</name>
    <dbReference type="NCBI Taxonomy" id="223926"/>
    <lineage>
        <taxon>Bacteria</taxon>
        <taxon>Pseudomonadati</taxon>
        <taxon>Pseudomonadota</taxon>
        <taxon>Gammaproteobacteria</taxon>
        <taxon>Vibrionales</taxon>
        <taxon>Vibrionaceae</taxon>
        <taxon>Vibrio</taxon>
    </lineage>
</organism>
<proteinExistence type="inferred from homology"/>
<keyword id="KW-0320">Glycogen biosynthesis</keyword>
<keyword id="KW-0328">Glycosyltransferase</keyword>
<keyword id="KW-0808">Transferase</keyword>
<accession>Q87QX5</accession>
<sequence>MATNNLSILFVASEVEGLIKSGGLADVAKALPEALQNLQQDVRITIPAYTSIERLADAEVVLETNLTSWPHTKYRVLLLTLGNNPVYLIDCDPYFNRPSMYAENNQAYTDNGERFAFFSAACLDMLPKLAFQPDIIHANDWHTGLVPFLLKHRYGNDPFFAHTKSVISIHNAVFKGVFSYDDVQCLPEFHCRNVPDAAVSATHITMLKAGVMNADKINAVSPTYAEELKTELGSHGMAWEFQQRAGDLVGILNGCDYSAWNPETDIYLPMNYSADKQSMVLGKNTCKRALQQRLNLAEKDVAMFGMVCRLTQQKGVHYLLPALADFLKHDVQVVVVGTGDPVLAAQLEEVAAQFSDKFVFVEAYDNELAHLVEAGSDFFLMPSEFEPCGLNQIYSMAYGTLPIVRGVGGLKDSVNDYDVDPCDATGFVFYEPTSQALLLTMLRALLLYAQNLTEVQRVQLHAMQKDFCWRKAAESYLQLYRSALN</sequence>
<feature type="chain" id="PRO_0000188661" description="Glycogen synthase">
    <location>
        <begin position="1"/>
        <end position="485"/>
    </location>
</feature>
<feature type="binding site" evidence="1">
    <location>
        <position position="20"/>
    </location>
    <ligand>
        <name>ADP-alpha-D-glucose</name>
        <dbReference type="ChEBI" id="CHEBI:57498"/>
    </ligand>
</feature>